<comment type="function">
    <text evidence="1">Transport of potassium into the cell. Likely operates as a K(+):H(+) symporter.</text>
</comment>
<comment type="catalytic activity">
    <reaction evidence="1">
        <text>K(+)(in) + H(+)(in) = K(+)(out) + H(+)(out)</text>
        <dbReference type="Rhea" id="RHEA:28490"/>
        <dbReference type="ChEBI" id="CHEBI:15378"/>
        <dbReference type="ChEBI" id="CHEBI:29103"/>
    </reaction>
    <physiologicalReaction direction="right-to-left" evidence="1">
        <dbReference type="Rhea" id="RHEA:28492"/>
    </physiologicalReaction>
</comment>
<comment type="subcellular location">
    <subcellularLocation>
        <location evidence="1">Cell inner membrane</location>
        <topology evidence="1">Multi-pass membrane protein</topology>
    </subcellularLocation>
</comment>
<comment type="similarity">
    <text evidence="1">Belongs to the HAK/KUP transporter (TC 2.A.72) family.</text>
</comment>
<name>KUP2_BRASO</name>
<feature type="chain" id="PRO_0000296763" description="Probable potassium transport system protein Kup 2">
    <location>
        <begin position="1"/>
        <end position="640"/>
    </location>
</feature>
<feature type="transmembrane region" description="Helical" evidence="1">
    <location>
        <begin position="30"/>
        <end position="50"/>
    </location>
</feature>
<feature type="transmembrane region" description="Helical" evidence="1">
    <location>
        <begin position="71"/>
        <end position="91"/>
    </location>
</feature>
<feature type="transmembrane region" description="Helical" evidence="1">
    <location>
        <begin position="117"/>
        <end position="137"/>
    </location>
</feature>
<feature type="transmembrane region" description="Helical" evidence="1">
    <location>
        <begin position="155"/>
        <end position="175"/>
    </location>
</feature>
<feature type="transmembrane region" description="Helical" evidence="1">
    <location>
        <begin position="183"/>
        <end position="203"/>
    </location>
</feature>
<feature type="transmembrane region" description="Helical" evidence="1">
    <location>
        <begin position="224"/>
        <end position="244"/>
    </location>
</feature>
<feature type="transmembrane region" description="Helical" evidence="1">
    <location>
        <begin position="265"/>
        <end position="285"/>
    </location>
</feature>
<feature type="transmembrane region" description="Helical" evidence="1">
    <location>
        <begin position="294"/>
        <end position="314"/>
    </location>
</feature>
<feature type="transmembrane region" description="Helical" evidence="1">
    <location>
        <begin position="363"/>
        <end position="383"/>
    </location>
</feature>
<feature type="transmembrane region" description="Helical" evidence="1">
    <location>
        <begin position="385"/>
        <end position="405"/>
    </location>
</feature>
<feature type="transmembrane region" description="Helical" evidence="1">
    <location>
        <begin position="410"/>
        <end position="430"/>
    </location>
</feature>
<feature type="transmembrane region" description="Helical" evidence="1">
    <location>
        <begin position="437"/>
        <end position="457"/>
    </location>
</feature>
<feature type="region of interest" description="Disordered" evidence="2">
    <location>
        <begin position="1"/>
        <end position="20"/>
    </location>
</feature>
<sequence>MTADIAATPAETPATNGHGDAHSTASFTALTLGSIGVVYGDIGTSPLYALREAVMAASSGGEAAPHAVMGVVSLILWALIVVVTLKYVVILLRADNHGEGGTLALMALAQRGVARGASIIVLLGIISGALFYGDAVITPALSVLSAIEGIKLVTAAFDPYVVPLTIIILVMLFAVQVRGTAKVAAFFGPIMLIWFLVIGIAAFPPILRHPEVLWAINPLHAVSFMLHHGIIGFITLGAVFLAVTGAEALYADLGHFGKRPIQTAWLFVVLPSLALNYLGQGALVIADAKAIENPFFLMFPDWALIPMVALATVATVIASQAVITGAYSLTRQAIQLGLLPRFEIRHTSEAHSGQIYIPRINKLLLVSVVLLVLLFKSSSALASAYGISVTGTMVVTAMMGFVVIWKVWRWSPIAAGALIAPFLFLDLTFLSANLLKVLEGGWVPLALGGFVMTLMYTWRRGSRLLFDKSRKLEFPLADLVAMLEKRPPQRVAGTAVFLTSDPLSAPTALMHSLKHYKVLHEKNVILTIETAPTPRIDPSERVRLEQISPTFSKVTLRFGFMESPNVPKALAIARKLGWQFDIMSTSFFLSRRALKPAAHSGMPRWQDHLFITMSRSANDATDYFQIPSGRVVEVGTQVTI</sequence>
<dbReference type="EMBL" id="CU234118">
    <property type="protein sequence ID" value="CAL78414.1"/>
    <property type="molecule type" value="Genomic_DNA"/>
</dbReference>
<dbReference type="RefSeq" id="WP_011927514.1">
    <property type="nucleotide sequence ID" value="NC_009445.1"/>
</dbReference>
<dbReference type="STRING" id="114615.BRADO4684"/>
<dbReference type="KEGG" id="bra:BRADO4684"/>
<dbReference type="eggNOG" id="COG3158">
    <property type="taxonomic scope" value="Bacteria"/>
</dbReference>
<dbReference type="HOGENOM" id="CLU_008142_4_2_5"/>
<dbReference type="OrthoDB" id="9805577at2"/>
<dbReference type="Proteomes" id="UP000001994">
    <property type="component" value="Chromosome"/>
</dbReference>
<dbReference type="GO" id="GO:0005886">
    <property type="term" value="C:plasma membrane"/>
    <property type="evidence" value="ECO:0007669"/>
    <property type="project" value="UniProtKB-SubCell"/>
</dbReference>
<dbReference type="GO" id="GO:0015079">
    <property type="term" value="F:potassium ion transmembrane transporter activity"/>
    <property type="evidence" value="ECO:0007669"/>
    <property type="project" value="UniProtKB-UniRule"/>
</dbReference>
<dbReference type="GO" id="GO:0015293">
    <property type="term" value="F:symporter activity"/>
    <property type="evidence" value="ECO:0007669"/>
    <property type="project" value="UniProtKB-UniRule"/>
</dbReference>
<dbReference type="HAMAP" id="MF_01522">
    <property type="entry name" value="Kup"/>
    <property type="match status" value="1"/>
</dbReference>
<dbReference type="InterPro" id="IPR003855">
    <property type="entry name" value="K+_transporter"/>
</dbReference>
<dbReference type="InterPro" id="IPR053952">
    <property type="entry name" value="K_trans_C"/>
</dbReference>
<dbReference type="InterPro" id="IPR053951">
    <property type="entry name" value="K_trans_N"/>
</dbReference>
<dbReference type="InterPro" id="IPR023051">
    <property type="entry name" value="Kup"/>
</dbReference>
<dbReference type="PANTHER" id="PTHR30540:SF79">
    <property type="entry name" value="LOW AFFINITY POTASSIUM TRANSPORT SYSTEM PROTEIN KUP"/>
    <property type="match status" value="1"/>
</dbReference>
<dbReference type="PANTHER" id="PTHR30540">
    <property type="entry name" value="OSMOTIC STRESS POTASSIUM TRANSPORTER"/>
    <property type="match status" value="1"/>
</dbReference>
<dbReference type="Pfam" id="PF02705">
    <property type="entry name" value="K_trans"/>
    <property type="match status" value="1"/>
</dbReference>
<dbReference type="Pfam" id="PF22776">
    <property type="entry name" value="K_trans_C"/>
    <property type="match status" value="1"/>
</dbReference>
<protein>
    <recommendedName>
        <fullName evidence="1">Probable potassium transport system protein Kup 2</fullName>
    </recommendedName>
</protein>
<proteinExistence type="inferred from homology"/>
<keyword id="KW-0997">Cell inner membrane</keyword>
<keyword id="KW-1003">Cell membrane</keyword>
<keyword id="KW-0406">Ion transport</keyword>
<keyword id="KW-0472">Membrane</keyword>
<keyword id="KW-0630">Potassium</keyword>
<keyword id="KW-0633">Potassium transport</keyword>
<keyword id="KW-1185">Reference proteome</keyword>
<keyword id="KW-0769">Symport</keyword>
<keyword id="KW-0812">Transmembrane</keyword>
<keyword id="KW-1133">Transmembrane helix</keyword>
<keyword id="KW-0813">Transport</keyword>
<evidence type="ECO:0000255" key="1">
    <source>
        <dbReference type="HAMAP-Rule" id="MF_01522"/>
    </source>
</evidence>
<evidence type="ECO:0000256" key="2">
    <source>
        <dbReference type="SAM" id="MobiDB-lite"/>
    </source>
</evidence>
<reference key="1">
    <citation type="journal article" date="2007" name="Science">
        <title>Legumes symbioses: absence of nod genes in photosynthetic bradyrhizobia.</title>
        <authorList>
            <person name="Giraud E."/>
            <person name="Moulin L."/>
            <person name="Vallenet D."/>
            <person name="Barbe V."/>
            <person name="Cytryn E."/>
            <person name="Avarre J.-C."/>
            <person name="Jaubert M."/>
            <person name="Simon D."/>
            <person name="Cartieaux F."/>
            <person name="Prin Y."/>
            <person name="Bena G."/>
            <person name="Hannibal L."/>
            <person name="Fardoux J."/>
            <person name="Kojadinovic M."/>
            <person name="Vuillet L."/>
            <person name="Lajus A."/>
            <person name="Cruveiller S."/>
            <person name="Rouy Z."/>
            <person name="Mangenot S."/>
            <person name="Segurens B."/>
            <person name="Dossat C."/>
            <person name="Franck W.L."/>
            <person name="Chang W.-S."/>
            <person name="Saunders E."/>
            <person name="Bruce D."/>
            <person name="Richardson P."/>
            <person name="Normand P."/>
            <person name="Dreyfus B."/>
            <person name="Pignol D."/>
            <person name="Stacey G."/>
            <person name="Emerich D."/>
            <person name="Vermeglio A."/>
            <person name="Medigue C."/>
            <person name="Sadowsky M."/>
        </authorList>
    </citation>
    <scope>NUCLEOTIDE SEQUENCE [LARGE SCALE GENOMIC DNA]</scope>
    <source>
        <strain>ORS 278</strain>
    </source>
</reference>
<organism>
    <name type="scientific">Bradyrhizobium sp. (strain ORS 278)</name>
    <dbReference type="NCBI Taxonomy" id="114615"/>
    <lineage>
        <taxon>Bacteria</taxon>
        <taxon>Pseudomonadati</taxon>
        <taxon>Pseudomonadota</taxon>
        <taxon>Alphaproteobacteria</taxon>
        <taxon>Hyphomicrobiales</taxon>
        <taxon>Nitrobacteraceae</taxon>
        <taxon>Bradyrhizobium</taxon>
    </lineage>
</organism>
<gene>
    <name evidence="1" type="primary">kup2</name>
    <name type="ordered locus">BRADO4684</name>
</gene>
<accession>A4YWY8</accession>